<organism>
    <name type="scientific">Nocardia farcinica (strain IFM 10152)</name>
    <dbReference type="NCBI Taxonomy" id="247156"/>
    <lineage>
        <taxon>Bacteria</taxon>
        <taxon>Bacillati</taxon>
        <taxon>Actinomycetota</taxon>
        <taxon>Actinomycetes</taxon>
        <taxon>Mycobacteriales</taxon>
        <taxon>Nocardiaceae</taxon>
        <taxon>Nocardia</taxon>
    </lineage>
</organism>
<name>RS14Z_NOCFA</name>
<protein>
    <recommendedName>
        <fullName evidence="1">Small ribosomal subunit protein uS14B</fullName>
    </recommendedName>
    <alternativeName>
        <fullName evidence="2">30S ribosomal protein S14 type Z</fullName>
    </alternativeName>
</protein>
<sequence>MAKKALVNKANRKPKFAVRAYTRCQRCGRPHAVYRKFGLCRVCLRDMAHKGELPGVHKSSW</sequence>
<dbReference type="EMBL" id="AP006618">
    <property type="protein sequence ID" value="BAD55622.1"/>
    <property type="molecule type" value="Genomic_DNA"/>
</dbReference>
<dbReference type="RefSeq" id="WP_011207308.1">
    <property type="nucleotide sequence ID" value="NC_006361.1"/>
</dbReference>
<dbReference type="SMR" id="Q5Z1R9"/>
<dbReference type="STRING" id="247156.NFA_7770"/>
<dbReference type="GeneID" id="61131609"/>
<dbReference type="KEGG" id="nfa:NFA_7770"/>
<dbReference type="eggNOG" id="COG0199">
    <property type="taxonomic scope" value="Bacteria"/>
</dbReference>
<dbReference type="HOGENOM" id="CLU_139869_3_0_11"/>
<dbReference type="OrthoDB" id="9810484at2"/>
<dbReference type="Proteomes" id="UP000006820">
    <property type="component" value="Chromosome"/>
</dbReference>
<dbReference type="GO" id="GO:0005737">
    <property type="term" value="C:cytoplasm"/>
    <property type="evidence" value="ECO:0007669"/>
    <property type="project" value="UniProtKB-ARBA"/>
</dbReference>
<dbReference type="GO" id="GO:0015935">
    <property type="term" value="C:small ribosomal subunit"/>
    <property type="evidence" value="ECO:0007669"/>
    <property type="project" value="TreeGrafter"/>
</dbReference>
<dbReference type="GO" id="GO:0019843">
    <property type="term" value="F:rRNA binding"/>
    <property type="evidence" value="ECO:0007669"/>
    <property type="project" value="UniProtKB-UniRule"/>
</dbReference>
<dbReference type="GO" id="GO:0003735">
    <property type="term" value="F:structural constituent of ribosome"/>
    <property type="evidence" value="ECO:0007669"/>
    <property type="project" value="InterPro"/>
</dbReference>
<dbReference type="GO" id="GO:0008270">
    <property type="term" value="F:zinc ion binding"/>
    <property type="evidence" value="ECO:0007669"/>
    <property type="project" value="UniProtKB-UniRule"/>
</dbReference>
<dbReference type="GO" id="GO:0006412">
    <property type="term" value="P:translation"/>
    <property type="evidence" value="ECO:0007669"/>
    <property type="project" value="UniProtKB-UniRule"/>
</dbReference>
<dbReference type="FunFam" id="4.10.830.10:FF:000001">
    <property type="entry name" value="30S ribosomal protein S14 type Z"/>
    <property type="match status" value="1"/>
</dbReference>
<dbReference type="Gene3D" id="4.10.830.10">
    <property type="entry name" value="30s Ribosomal Protein S14, Chain N"/>
    <property type="match status" value="1"/>
</dbReference>
<dbReference type="HAMAP" id="MF_01364_B">
    <property type="entry name" value="Ribosomal_uS14_2_B"/>
    <property type="match status" value="1"/>
</dbReference>
<dbReference type="InterPro" id="IPR001209">
    <property type="entry name" value="Ribosomal_uS14"/>
</dbReference>
<dbReference type="InterPro" id="IPR023053">
    <property type="entry name" value="Ribosomal_uS14_bact"/>
</dbReference>
<dbReference type="InterPro" id="IPR018271">
    <property type="entry name" value="Ribosomal_uS14_CS"/>
</dbReference>
<dbReference type="InterPro" id="IPR043140">
    <property type="entry name" value="Ribosomal_uS14_sf"/>
</dbReference>
<dbReference type="NCBIfam" id="NF005974">
    <property type="entry name" value="PRK08061.1"/>
    <property type="match status" value="1"/>
</dbReference>
<dbReference type="PANTHER" id="PTHR19836">
    <property type="entry name" value="30S RIBOSOMAL PROTEIN S14"/>
    <property type="match status" value="1"/>
</dbReference>
<dbReference type="PANTHER" id="PTHR19836:SF19">
    <property type="entry name" value="SMALL RIBOSOMAL SUBUNIT PROTEIN US14M"/>
    <property type="match status" value="1"/>
</dbReference>
<dbReference type="Pfam" id="PF00253">
    <property type="entry name" value="Ribosomal_S14"/>
    <property type="match status" value="1"/>
</dbReference>
<dbReference type="SUPFAM" id="SSF57716">
    <property type="entry name" value="Glucocorticoid receptor-like (DNA-binding domain)"/>
    <property type="match status" value="1"/>
</dbReference>
<dbReference type="PROSITE" id="PS00527">
    <property type="entry name" value="RIBOSOMAL_S14"/>
    <property type="match status" value="1"/>
</dbReference>
<gene>
    <name evidence="1" type="primary">rpsZ</name>
    <name evidence="1" type="synonym">rpsN</name>
    <name type="ordered locus">NFA_7770</name>
</gene>
<comment type="function">
    <text evidence="1">Binds 16S rRNA, required for the assembly of 30S particles and may also be responsible for determining the conformation of the 16S rRNA at the A site.</text>
</comment>
<comment type="cofactor">
    <cofactor evidence="1">
        <name>Zn(2+)</name>
        <dbReference type="ChEBI" id="CHEBI:29105"/>
    </cofactor>
    <text evidence="1">Binds 1 zinc ion per subunit.</text>
</comment>
<comment type="subunit">
    <text evidence="1">Part of the 30S ribosomal subunit. Contacts proteins S3 and S10.</text>
</comment>
<comment type="similarity">
    <text evidence="1">Belongs to the universal ribosomal protein uS14 family. Zinc-binding uS14 subfamily.</text>
</comment>
<accession>Q5Z1R9</accession>
<evidence type="ECO:0000255" key="1">
    <source>
        <dbReference type="HAMAP-Rule" id="MF_01364"/>
    </source>
</evidence>
<evidence type="ECO:0000305" key="2"/>
<reference key="1">
    <citation type="journal article" date="2004" name="Proc. Natl. Acad. Sci. U.S.A.">
        <title>The complete genomic sequence of Nocardia farcinica IFM 10152.</title>
        <authorList>
            <person name="Ishikawa J."/>
            <person name="Yamashita A."/>
            <person name="Mikami Y."/>
            <person name="Hoshino Y."/>
            <person name="Kurita H."/>
            <person name="Hotta K."/>
            <person name="Shiba T."/>
            <person name="Hattori M."/>
        </authorList>
    </citation>
    <scope>NUCLEOTIDE SEQUENCE [LARGE SCALE GENOMIC DNA]</scope>
    <source>
        <strain>IFM 10152</strain>
    </source>
</reference>
<proteinExistence type="inferred from homology"/>
<keyword id="KW-0479">Metal-binding</keyword>
<keyword id="KW-1185">Reference proteome</keyword>
<keyword id="KW-0687">Ribonucleoprotein</keyword>
<keyword id="KW-0689">Ribosomal protein</keyword>
<keyword id="KW-0694">RNA-binding</keyword>
<keyword id="KW-0699">rRNA-binding</keyword>
<keyword id="KW-0862">Zinc</keyword>
<feature type="chain" id="PRO_0000269125" description="Small ribosomal subunit protein uS14B">
    <location>
        <begin position="1"/>
        <end position="61"/>
    </location>
</feature>
<feature type="binding site" evidence="1">
    <location>
        <position position="24"/>
    </location>
    <ligand>
        <name>Zn(2+)</name>
        <dbReference type="ChEBI" id="CHEBI:29105"/>
    </ligand>
</feature>
<feature type="binding site" evidence="1">
    <location>
        <position position="27"/>
    </location>
    <ligand>
        <name>Zn(2+)</name>
        <dbReference type="ChEBI" id="CHEBI:29105"/>
    </ligand>
</feature>
<feature type="binding site" evidence="1">
    <location>
        <position position="40"/>
    </location>
    <ligand>
        <name>Zn(2+)</name>
        <dbReference type="ChEBI" id="CHEBI:29105"/>
    </ligand>
</feature>
<feature type="binding site" evidence="1">
    <location>
        <position position="43"/>
    </location>
    <ligand>
        <name>Zn(2+)</name>
        <dbReference type="ChEBI" id="CHEBI:29105"/>
    </ligand>
</feature>